<evidence type="ECO:0000255" key="1">
    <source>
        <dbReference type="HAMAP-Rule" id="MF_00340"/>
    </source>
</evidence>
<evidence type="ECO:0000305" key="2"/>
<feature type="chain" id="PRO_0000172446" description="Large ribosomal subunit protein bL32c">
    <location>
        <begin position="1"/>
        <end position="57"/>
    </location>
</feature>
<accession>Q70XW5</accession>
<protein>
    <recommendedName>
        <fullName evidence="1">Large ribosomal subunit protein bL32c</fullName>
    </recommendedName>
    <alternativeName>
        <fullName evidence="2">50S ribosomal protein L32, chloroplastic</fullName>
    </alternativeName>
</protein>
<reference key="1">
    <citation type="journal article" date="2003" name="Mol. Biol. Evol.">
        <title>Analysis of the Amborella trichopoda chloroplast genome sequence suggests that Amborella is not a basal angiosperm.</title>
        <authorList>
            <person name="Goremykin V.V."/>
            <person name="Hirsch-Ernst K.I."/>
            <person name="Wolfl S."/>
            <person name="Hellwig F.H."/>
        </authorList>
    </citation>
    <scope>NUCLEOTIDE SEQUENCE [LARGE SCALE GENOMIC DNA]</scope>
</reference>
<name>RK32_AMBTC</name>
<proteinExistence type="inferred from homology"/>
<organism>
    <name type="scientific">Amborella trichopoda</name>
    <dbReference type="NCBI Taxonomy" id="13333"/>
    <lineage>
        <taxon>Eukaryota</taxon>
        <taxon>Viridiplantae</taxon>
        <taxon>Streptophyta</taxon>
        <taxon>Embryophyta</taxon>
        <taxon>Tracheophyta</taxon>
        <taxon>Spermatophyta</taxon>
        <taxon>Magnoliopsida</taxon>
        <taxon>Amborellales</taxon>
        <taxon>Amborellaceae</taxon>
        <taxon>Amborella</taxon>
    </lineage>
</organism>
<gene>
    <name evidence="1" type="primary">rpl32</name>
</gene>
<comment type="subcellular location">
    <subcellularLocation>
        <location>Plastid</location>
        <location>Chloroplast</location>
    </subcellularLocation>
</comment>
<comment type="similarity">
    <text evidence="1">Belongs to the bacterial ribosomal protein bL32 family.</text>
</comment>
<keyword id="KW-0150">Chloroplast</keyword>
<keyword id="KW-0934">Plastid</keyword>
<keyword id="KW-1185">Reference proteome</keyword>
<keyword id="KW-0687">Ribonucleoprotein</keyword>
<keyword id="KW-0689">Ribosomal protein</keyword>
<geneLocation type="chloroplast"/>
<dbReference type="EMBL" id="AJ506156">
    <property type="protein sequence ID" value="CAD45155.1"/>
    <property type="molecule type" value="Genomic_DNA"/>
</dbReference>
<dbReference type="RefSeq" id="NP_904147.1">
    <property type="nucleotide sequence ID" value="NC_005086.1"/>
</dbReference>
<dbReference type="SMR" id="Q70XW5"/>
<dbReference type="STRING" id="13333.Q70XW5"/>
<dbReference type="GeneID" id="2546583"/>
<dbReference type="KEGG" id="atr:2546583"/>
<dbReference type="OrthoDB" id="1938523at2759"/>
<dbReference type="Proteomes" id="UP000017836">
    <property type="component" value="Chloroplast"/>
</dbReference>
<dbReference type="GO" id="GO:0009507">
    <property type="term" value="C:chloroplast"/>
    <property type="evidence" value="ECO:0007669"/>
    <property type="project" value="UniProtKB-SubCell"/>
</dbReference>
<dbReference type="GO" id="GO:0015934">
    <property type="term" value="C:large ribosomal subunit"/>
    <property type="evidence" value="ECO:0007669"/>
    <property type="project" value="InterPro"/>
</dbReference>
<dbReference type="GO" id="GO:0003735">
    <property type="term" value="F:structural constituent of ribosome"/>
    <property type="evidence" value="ECO:0007669"/>
    <property type="project" value="InterPro"/>
</dbReference>
<dbReference type="GO" id="GO:0006412">
    <property type="term" value="P:translation"/>
    <property type="evidence" value="ECO:0007669"/>
    <property type="project" value="UniProtKB-UniRule"/>
</dbReference>
<dbReference type="HAMAP" id="MF_00340">
    <property type="entry name" value="Ribosomal_bL32"/>
    <property type="match status" value="1"/>
</dbReference>
<dbReference type="InterPro" id="IPR002677">
    <property type="entry name" value="Ribosomal_bL32"/>
</dbReference>
<dbReference type="InterPro" id="IPR044958">
    <property type="entry name" value="Ribosomal_bL32_plant/cyanobact"/>
</dbReference>
<dbReference type="InterPro" id="IPR011332">
    <property type="entry name" value="Ribosomal_zn-bd"/>
</dbReference>
<dbReference type="PANTHER" id="PTHR36083">
    <property type="entry name" value="50S RIBOSOMAL PROTEIN L32, CHLOROPLASTIC"/>
    <property type="match status" value="1"/>
</dbReference>
<dbReference type="PANTHER" id="PTHR36083:SF1">
    <property type="entry name" value="LARGE RIBOSOMAL SUBUNIT PROTEIN BL32C"/>
    <property type="match status" value="1"/>
</dbReference>
<dbReference type="Pfam" id="PF01783">
    <property type="entry name" value="Ribosomal_L32p"/>
    <property type="match status" value="1"/>
</dbReference>
<dbReference type="SUPFAM" id="SSF57829">
    <property type="entry name" value="Zn-binding ribosomal proteins"/>
    <property type="match status" value="1"/>
</dbReference>
<sequence length="57" mass="6548">MAVPKKRTSMSKKHIRRNYWKRKGYKAAVKAFSLGKSVSTGHSKSFFVQQTTTKTNK</sequence>